<name>AGRB_STAAT</name>
<dbReference type="EC" id="3.4.-.-" evidence="1"/>
<dbReference type="EMBL" id="CP000730">
    <property type="protein sequence ID" value="ABX30029.1"/>
    <property type="molecule type" value="Genomic_DNA"/>
</dbReference>
<dbReference type="RefSeq" id="WP_001105707.1">
    <property type="nucleotide sequence ID" value="NC_010079.1"/>
</dbReference>
<dbReference type="MEROPS" id="C75.001"/>
<dbReference type="KEGG" id="sax:USA300HOU_2032"/>
<dbReference type="HOGENOM" id="CLU_098969_2_2_9"/>
<dbReference type="GO" id="GO:0005886">
    <property type="term" value="C:plasma membrane"/>
    <property type="evidence" value="ECO:0007669"/>
    <property type="project" value="UniProtKB-SubCell"/>
</dbReference>
<dbReference type="GO" id="GO:0008233">
    <property type="term" value="F:peptidase activity"/>
    <property type="evidence" value="ECO:0007669"/>
    <property type="project" value="UniProtKB-UniRule"/>
</dbReference>
<dbReference type="GO" id="GO:0006508">
    <property type="term" value="P:proteolysis"/>
    <property type="evidence" value="ECO:0007669"/>
    <property type="project" value="UniProtKB-KW"/>
</dbReference>
<dbReference type="GO" id="GO:0009372">
    <property type="term" value="P:quorum sensing"/>
    <property type="evidence" value="ECO:0007669"/>
    <property type="project" value="UniProtKB-UniRule"/>
</dbReference>
<dbReference type="HAMAP" id="MF_00784">
    <property type="entry name" value="AgrB"/>
    <property type="match status" value="1"/>
</dbReference>
<dbReference type="InterPro" id="IPR006741">
    <property type="entry name" value="AgrB"/>
</dbReference>
<dbReference type="Pfam" id="PF04647">
    <property type="entry name" value="AgrB"/>
    <property type="match status" value="1"/>
</dbReference>
<dbReference type="SMART" id="SM00793">
    <property type="entry name" value="AgrB"/>
    <property type="match status" value="1"/>
</dbReference>
<organism>
    <name type="scientific">Staphylococcus aureus (strain USA300 / TCH1516)</name>
    <dbReference type="NCBI Taxonomy" id="451516"/>
    <lineage>
        <taxon>Bacteria</taxon>
        <taxon>Bacillati</taxon>
        <taxon>Bacillota</taxon>
        <taxon>Bacilli</taxon>
        <taxon>Bacillales</taxon>
        <taxon>Staphylococcaceae</taxon>
        <taxon>Staphylococcus</taxon>
    </lineage>
</organism>
<feature type="chain" id="PRO_1000083588" description="Accessory gene regulator protein B">
    <location>
        <begin position="1"/>
        <end position="189"/>
    </location>
</feature>
<feature type="transmembrane region" description="Helical" evidence="1">
    <location>
        <begin position="49"/>
        <end position="69"/>
    </location>
</feature>
<feature type="transmembrane region" description="Helical" evidence="1">
    <location>
        <begin position="81"/>
        <end position="100"/>
    </location>
</feature>
<feature type="transmembrane region" description="Helical" evidence="1">
    <location>
        <begin position="110"/>
        <end position="130"/>
    </location>
</feature>
<feature type="transmembrane region" description="Helical" evidence="1">
    <location>
        <begin position="143"/>
        <end position="163"/>
    </location>
</feature>
<feature type="transmembrane region" description="Helical" evidence="1">
    <location>
        <begin position="164"/>
        <end position="184"/>
    </location>
</feature>
<keyword id="KW-1003">Cell membrane</keyword>
<keyword id="KW-0378">Hydrolase</keyword>
<keyword id="KW-0472">Membrane</keyword>
<keyword id="KW-0645">Protease</keyword>
<keyword id="KW-0673">Quorum sensing</keyword>
<keyword id="KW-0812">Transmembrane</keyword>
<keyword id="KW-1133">Transmembrane helix</keyword>
<keyword id="KW-0843">Virulence</keyword>
<proteinExistence type="inferred from homology"/>
<gene>
    <name evidence="1" type="primary">agrB</name>
    <name type="ordered locus">USA300HOU_2032</name>
</gene>
<sequence length="189" mass="21930">MNYFDNKIDQFATYLQKRNNLDHIQFLQVRLGMQVLAKNIGKLIVMYTIAYILNIFLFTLITNLTFYLIRRHAHGAHAPSSFWCYVESIILFILLPLVIVNFHINFLIMIILTVISLGVISVYAPAATKKKPIPVRLIKRKKYYAIIVSLTLFIITLIIKEPFAQFIQLGIIIEAITLLPIFFIKEDLK</sequence>
<accession>A8Z4U0</accession>
<evidence type="ECO:0000255" key="1">
    <source>
        <dbReference type="HAMAP-Rule" id="MF_00784"/>
    </source>
</evidence>
<comment type="function">
    <text evidence="1">Essential for the production of a quorum sensing system signal molecule, the autoinducing peptide (AIP). This quorum sensing system is responsible for the regulation of the expression of virulence factor genes. Involved in the proteolytic processing of AgrD, the precursor of AIP.</text>
</comment>
<comment type="subcellular location">
    <subcellularLocation>
        <location evidence="1">Cell membrane</location>
        <topology evidence="1">Multi-pass membrane protein</topology>
    </subcellularLocation>
</comment>
<comment type="similarity">
    <text evidence="1">Belongs to the AgrB family.</text>
</comment>
<protein>
    <recommendedName>
        <fullName evidence="1">Accessory gene regulator protein B</fullName>
        <ecNumber evidence="1">3.4.-.-</ecNumber>
    </recommendedName>
</protein>
<reference key="1">
    <citation type="journal article" date="2007" name="BMC Microbiol.">
        <title>Subtle genetic changes enhance virulence of methicillin resistant and sensitive Staphylococcus aureus.</title>
        <authorList>
            <person name="Highlander S.K."/>
            <person name="Hulten K.G."/>
            <person name="Qin X."/>
            <person name="Jiang H."/>
            <person name="Yerrapragada S."/>
            <person name="Mason E.O. Jr."/>
            <person name="Shang Y."/>
            <person name="Williams T.M."/>
            <person name="Fortunov R.M."/>
            <person name="Liu Y."/>
            <person name="Igboeli O."/>
            <person name="Petrosino J."/>
            <person name="Tirumalai M."/>
            <person name="Uzman A."/>
            <person name="Fox G.E."/>
            <person name="Cardenas A.M."/>
            <person name="Muzny D.M."/>
            <person name="Hemphill L."/>
            <person name="Ding Y."/>
            <person name="Dugan S."/>
            <person name="Blyth P.R."/>
            <person name="Buhay C.J."/>
            <person name="Dinh H.H."/>
            <person name="Hawes A.C."/>
            <person name="Holder M."/>
            <person name="Kovar C.L."/>
            <person name="Lee S.L."/>
            <person name="Liu W."/>
            <person name="Nazareth L.V."/>
            <person name="Wang Q."/>
            <person name="Zhou J."/>
            <person name="Kaplan S.L."/>
            <person name="Weinstock G.M."/>
        </authorList>
    </citation>
    <scope>NUCLEOTIDE SEQUENCE [LARGE SCALE GENOMIC DNA]</scope>
    <source>
        <strain>USA300 / TCH1516</strain>
    </source>
</reference>